<accession>Q9JM10</accession>
<accession>Q9JM11</accession>
<dbReference type="EMBL" id="AF096268">
    <property type="protein sequence ID" value="AAF34866.1"/>
    <property type="molecule type" value="Genomic_DNA"/>
</dbReference>
<dbReference type="EMBL" id="AF095587">
    <property type="protein sequence ID" value="AAF34865.1"/>
    <property type="molecule type" value="mRNA"/>
</dbReference>
<dbReference type="SMR" id="Q9JM10"/>
<dbReference type="GlyCosmos" id="Q9JM10">
    <property type="glycosylation" value="1 site, No reported glycans"/>
</dbReference>
<dbReference type="GO" id="GO:0005615">
    <property type="term" value="C:extracellular space"/>
    <property type="evidence" value="ECO:0007669"/>
    <property type="project" value="UniProtKB-KW"/>
</dbReference>
<dbReference type="GO" id="GO:0016020">
    <property type="term" value="C:membrane"/>
    <property type="evidence" value="ECO:0007669"/>
    <property type="project" value="UniProtKB-SubCell"/>
</dbReference>
<dbReference type="GO" id="GO:0005125">
    <property type="term" value="F:cytokine activity"/>
    <property type="evidence" value="ECO:0007669"/>
    <property type="project" value="UniProtKB-KW"/>
</dbReference>
<dbReference type="GO" id="GO:0005164">
    <property type="term" value="F:tumor necrosis factor receptor binding"/>
    <property type="evidence" value="ECO:0007669"/>
    <property type="project" value="InterPro"/>
</dbReference>
<dbReference type="GO" id="GO:0006955">
    <property type="term" value="P:immune response"/>
    <property type="evidence" value="ECO:0007669"/>
    <property type="project" value="InterPro"/>
</dbReference>
<dbReference type="CDD" id="cd00184">
    <property type="entry name" value="TNF"/>
    <property type="match status" value="1"/>
</dbReference>
<dbReference type="FunFam" id="2.60.120.40:FF:000030">
    <property type="entry name" value="Lymphotoxin-beta"/>
    <property type="match status" value="1"/>
</dbReference>
<dbReference type="Gene3D" id="2.60.120.40">
    <property type="match status" value="1"/>
</dbReference>
<dbReference type="InterPro" id="IPR006053">
    <property type="entry name" value="TNF"/>
</dbReference>
<dbReference type="InterPro" id="IPR002961">
    <property type="entry name" value="TNF_C"/>
</dbReference>
<dbReference type="InterPro" id="IPR006052">
    <property type="entry name" value="TNF_dom"/>
</dbReference>
<dbReference type="InterPro" id="IPR008983">
    <property type="entry name" value="Tumour_necrosis_fac-like_dom"/>
</dbReference>
<dbReference type="PANTHER" id="PTHR11471:SF29">
    <property type="entry name" value="LYMPHOTOXIN-BETA"/>
    <property type="match status" value="1"/>
</dbReference>
<dbReference type="PANTHER" id="PTHR11471">
    <property type="entry name" value="TUMOR NECROSIS FACTOR FAMILY MEMBER"/>
    <property type="match status" value="1"/>
</dbReference>
<dbReference type="Pfam" id="PF00229">
    <property type="entry name" value="TNF"/>
    <property type="match status" value="1"/>
</dbReference>
<dbReference type="PRINTS" id="PR01234">
    <property type="entry name" value="TNECROSISFCT"/>
</dbReference>
<dbReference type="PRINTS" id="PR01237">
    <property type="entry name" value="TNFC"/>
</dbReference>
<dbReference type="SMART" id="SM00207">
    <property type="entry name" value="TNF"/>
    <property type="match status" value="1"/>
</dbReference>
<dbReference type="SUPFAM" id="SSF49842">
    <property type="entry name" value="TNF-like"/>
    <property type="match status" value="1"/>
</dbReference>
<dbReference type="PROSITE" id="PS50049">
    <property type="entry name" value="THD_2"/>
    <property type="match status" value="1"/>
</dbReference>
<reference key="1">
    <citation type="journal article" date="2000" name="Gene">
        <title>Woodchuck lymphotoxin-alpha, -beta and tumor necrosis factor genes: structure, characterization and biological activity.</title>
        <authorList>
            <person name="Li D.H."/>
            <person name="Havell E.A."/>
            <person name="Brown C.L."/>
            <person name="Cullen J.M."/>
        </authorList>
    </citation>
    <scope>NUCLEOTIDE SEQUENCE [GENOMIC DNA / MRNA]</scope>
</reference>
<proteinExistence type="evidence at transcript level"/>
<name>TNFC_MARMO</name>
<feature type="chain" id="PRO_0000185489" description="Lymphotoxin-beta">
    <location>
        <begin position="1"/>
        <end position="310"/>
    </location>
</feature>
<feature type="topological domain" description="Cytoplasmic" evidence="2">
    <location>
        <begin position="1"/>
        <end position="27"/>
    </location>
</feature>
<feature type="transmembrane region" description="Helical; Signal-anchor for type II membrane protein" evidence="2">
    <location>
        <begin position="28"/>
        <end position="48"/>
    </location>
</feature>
<feature type="topological domain" description="Extracellular" evidence="2">
    <location>
        <begin position="49"/>
        <end position="310"/>
    </location>
</feature>
<feature type="domain" description="THD" evidence="3">
    <location>
        <begin position="138"/>
        <end position="293"/>
    </location>
</feature>
<feature type="region of interest" description="Disordered" evidence="4">
    <location>
        <begin position="67"/>
        <end position="86"/>
    </location>
</feature>
<feature type="glycosylation site" description="N-linked (GlcNAc...) asparagine" evidence="2">
    <location>
        <position position="272"/>
    </location>
</feature>
<feature type="sequence conflict" description="In Ref. 1; AAF34865." evidence="5" ref="1">
    <original>D</original>
    <variation>H</variation>
    <location>
        <position position="280"/>
    </location>
</feature>
<sequence>MGALGLQGRGGRPQGTGCLLLAVAGATSLVTLLLAVPITVLAVLALVPQEQGGLVMESAGLGAQAQQGLSKSNGLPSRLHSQIPSSSKNPFLRPGALSSHGKHPWVATLPPIVASTPVPGFQQLQEEKPETDLSSRLPAAHLIGAWMKGQGLSWEAKKEEAFLRSGTQFSGAEGLALPQDGLYYLYCNVGYRGRAPPSGAGPQDRSVTLRSSLYRAGGAYGRGAPELLLEGAETVTPVLDRAGRPQYRPLWYTSVGFGGLVQLRRGERVYVNISHPDMVDYRRGKTFFGAVMVGLVPSASLGKCLHSANV</sequence>
<gene>
    <name type="primary">LTB</name>
    <name type="synonym">TNFC</name>
    <name type="synonym">TNFSF3</name>
</gene>
<evidence type="ECO:0000250" key="1"/>
<evidence type="ECO:0000255" key="2"/>
<evidence type="ECO:0000255" key="3">
    <source>
        <dbReference type="PROSITE-ProRule" id="PRU01387"/>
    </source>
</evidence>
<evidence type="ECO:0000256" key="4">
    <source>
        <dbReference type="SAM" id="MobiDB-lite"/>
    </source>
</evidence>
<evidence type="ECO:0000305" key="5"/>
<protein>
    <recommendedName>
        <fullName>Lymphotoxin-beta</fullName>
        <shortName>LT-beta</shortName>
    </recommendedName>
    <alternativeName>
        <fullName>Tumor necrosis factor C</fullName>
        <shortName>TNF-C</shortName>
    </alternativeName>
    <alternativeName>
        <fullName>Tumor necrosis factor ligand superfamily member 3</fullName>
    </alternativeName>
</protein>
<keyword id="KW-0202">Cytokine</keyword>
<keyword id="KW-0325">Glycoprotein</keyword>
<keyword id="KW-0472">Membrane</keyword>
<keyword id="KW-0735">Signal-anchor</keyword>
<keyword id="KW-0812">Transmembrane</keyword>
<keyword id="KW-1133">Transmembrane helix</keyword>
<organism>
    <name type="scientific">Marmota monax</name>
    <name type="common">Woodchuck</name>
    <dbReference type="NCBI Taxonomy" id="9995"/>
    <lineage>
        <taxon>Eukaryota</taxon>
        <taxon>Metazoa</taxon>
        <taxon>Chordata</taxon>
        <taxon>Craniata</taxon>
        <taxon>Vertebrata</taxon>
        <taxon>Euteleostomi</taxon>
        <taxon>Mammalia</taxon>
        <taxon>Eutheria</taxon>
        <taxon>Euarchontoglires</taxon>
        <taxon>Glires</taxon>
        <taxon>Rodentia</taxon>
        <taxon>Sciuromorpha</taxon>
        <taxon>Sciuridae</taxon>
        <taxon>Xerinae</taxon>
        <taxon>Marmotini</taxon>
        <taxon>Marmota</taxon>
    </lineage>
</organism>
<comment type="function">
    <text>Cytokine that binds to LTBR/TNFRSF3. May play a specific role in immune response regulation. Provides the membrane anchor for the attachment of the heterotrimeric complex to the cell surface.</text>
</comment>
<comment type="subunit">
    <text evidence="1">Heterotrimer of either two LTB and one LTA subunits or (less prevalent) two LTA and one LTB subunits.</text>
</comment>
<comment type="subcellular location">
    <subcellularLocation>
        <location evidence="5">Membrane</location>
        <topology evidence="5">Single-pass type II membrane protein</topology>
    </subcellularLocation>
</comment>
<comment type="similarity">
    <text evidence="5">Belongs to the tumor necrosis factor family.</text>
</comment>